<comment type="cofactor">
    <cofactor evidence="1">
        <name>Zn(2+)</name>
        <dbReference type="ChEBI" id="CHEBI:29105"/>
    </cofactor>
    <text evidence="1">Binds 1 zinc ion per subunit.</text>
</comment>
<comment type="subunit">
    <text evidence="1">Part of the 30S ribosomal subunit.</text>
</comment>
<comment type="similarity">
    <text evidence="1">Belongs to the eukaryotic ribosomal protein eS31 family.</text>
</comment>
<protein>
    <recommendedName>
        <fullName evidence="1">Small ribosomal subunit protein eS31</fullName>
    </recommendedName>
    <alternativeName>
        <fullName evidence="2">30S ribosomal protein S27ae</fullName>
    </alternativeName>
</protein>
<reference key="1">
    <citation type="journal article" date="2007" name="Archaea">
        <title>The genome of Hyperthermus butylicus: a sulfur-reducing, peptide fermenting, neutrophilic Crenarchaeote growing up to 108 degrees C.</title>
        <authorList>
            <person name="Bruegger K."/>
            <person name="Chen L."/>
            <person name="Stark M."/>
            <person name="Zibat A."/>
            <person name="Redder P."/>
            <person name="Ruepp A."/>
            <person name="Awayez M."/>
            <person name="She Q."/>
            <person name="Garrett R.A."/>
            <person name="Klenk H.-P."/>
        </authorList>
    </citation>
    <scope>NUCLEOTIDE SEQUENCE [LARGE SCALE GENOMIC DNA]</scope>
    <source>
        <strain>DSM 5456 / JCM 9403 / PLM1-5</strain>
    </source>
</reference>
<evidence type="ECO:0000255" key="1">
    <source>
        <dbReference type="HAMAP-Rule" id="MF_00777"/>
    </source>
</evidence>
<evidence type="ECO:0000305" key="2"/>
<keyword id="KW-0479">Metal-binding</keyword>
<keyword id="KW-1185">Reference proteome</keyword>
<keyword id="KW-0687">Ribonucleoprotein</keyword>
<keyword id="KW-0689">Ribosomal protein</keyword>
<keyword id="KW-0862">Zinc</keyword>
<keyword id="KW-0863">Zinc-finger</keyword>
<accession>A2BJZ0</accession>
<organism>
    <name type="scientific">Hyperthermus butylicus (strain DSM 5456 / JCM 9403 / PLM1-5)</name>
    <dbReference type="NCBI Taxonomy" id="415426"/>
    <lineage>
        <taxon>Archaea</taxon>
        <taxon>Thermoproteota</taxon>
        <taxon>Thermoprotei</taxon>
        <taxon>Desulfurococcales</taxon>
        <taxon>Pyrodictiaceae</taxon>
        <taxon>Hyperthermus</taxon>
    </lineage>
</organism>
<sequence>MSKELKLYVHRLYEYDYNTGTIKRKNKICPRCGSFMAFHKWPVPRWHCGKCGHTEFVREAKR</sequence>
<feature type="chain" id="PRO_1000194301" description="Small ribosomal subunit protein eS31">
    <location>
        <begin position="1"/>
        <end position="62"/>
    </location>
</feature>
<feature type="zinc finger region" description="C4-type" evidence="1">
    <location>
        <begin position="29"/>
        <end position="51"/>
    </location>
</feature>
<feature type="binding site" evidence="1">
    <location>
        <position position="29"/>
    </location>
    <ligand>
        <name>Zn(2+)</name>
        <dbReference type="ChEBI" id="CHEBI:29105"/>
    </ligand>
</feature>
<feature type="binding site" evidence="1">
    <location>
        <position position="32"/>
    </location>
    <ligand>
        <name>Zn(2+)</name>
        <dbReference type="ChEBI" id="CHEBI:29105"/>
    </ligand>
</feature>
<feature type="binding site" evidence="1">
    <location>
        <position position="48"/>
    </location>
    <ligand>
        <name>Zn(2+)</name>
        <dbReference type="ChEBI" id="CHEBI:29105"/>
    </ligand>
</feature>
<feature type="binding site" evidence="1">
    <location>
        <position position="51"/>
    </location>
    <ligand>
        <name>Zn(2+)</name>
        <dbReference type="ChEBI" id="CHEBI:29105"/>
    </ligand>
</feature>
<name>RS27A_HYPBU</name>
<proteinExistence type="inferred from homology"/>
<gene>
    <name evidence="1" type="primary">rps27ae</name>
    <name type="ordered locus">Hbut_0435</name>
</gene>
<dbReference type="EMBL" id="CP000493">
    <property type="protein sequence ID" value="ABM80301.1"/>
    <property type="molecule type" value="Genomic_DNA"/>
</dbReference>
<dbReference type="RefSeq" id="WP_011821619.1">
    <property type="nucleotide sequence ID" value="NC_008818.1"/>
</dbReference>
<dbReference type="SMR" id="A2BJZ0"/>
<dbReference type="STRING" id="415426.Hbut_0435"/>
<dbReference type="EnsemblBacteria" id="ABM80301">
    <property type="protein sequence ID" value="ABM80301"/>
    <property type="gene ID" value="Hbut_0435"/>
</dbReference>
<dbReference type="GeneID" id="4782848"/>
<dbReference type="KEGG" id="hbu:Hbut_0435"/>
<dbReference type="eggNOG" id="arCOG04183">
    <property type="taxonomic scope" value="Archaea"/>
</dbReference>
<dbReference type="HOGENOM" id="CLU_179743_1_0_2"/>
<dbReference type="OrthoDB" id="25142at2157"/>
<dbReference type="Proteomes" id="UP000002593">
    <property type="component" value="Chromosome"/>
</dbReference>
<dbReference type="GO" id="GO:1990904">
    <property type="term" value="C:ribonucleoprotein complex"/>
    <property type="evidence" value="ECO:0007669"/>
    <property type="project" value="UniProtKB-KW"/>
</dbReference>
<dbReference type="GO" id="GO:0005840">
    <property type="term" value="C:ribosome"/>
    <property type="evidence" value="ECO:0007669"/>
    <property type="project" value="UniProtKB-KW"/>
</dbReference>
<dbReference type="GO" id="GO:0003735">
    <property type="term" value="F:structural constituent of ribosome"/>
    <property type="evidence" value="ECO:0007669"/>
    <property type="project" value="InterPro"/>
</dbReference>
<dbReference type="GO" id="GO:0008270">
    <property type="term" value="F:zinc ion binding"/>
    <property type="evidence" value="ECO:0007669"/>
    <property type="project" value="UniProtKB-UniRule"/>
</dbReference>
<dbReference type="GO" id="GO:0006412">
    <property type="term" value="P:translation"/>
    <property type="evidence" value="ECO:0007669"/>
    <property type="project" value="UniProtKB-UniRule"/>
</dbReference>
<dbReference type="Gene3D" id="6.20.50.180">
    <property type="match status" value="1"/>
</dbReference>
<dbReference type="HAMAP" id="MF_00777">
    <property type="entry name" value="Ribosomal_eS31"/>
    <property type="match status" value="1"/>
</dbReference>
<dbReference type="InterPro" id="IPR002906">
    <property type="entry name" value="Ribosomal_eS31"/>
</dbReference>
<dbReference type="InterPro" id="IPR022845">
    <property type="entry name" value="Ribosomal_eS31_arc"/>
</dbReference>
<dbReference type="InterPro" id="IPR011332">
    <property type="entry name" value="Ribosomal_zn-bd"/>
</dbReference>
<dbReference type="NCBIfam" id="NF001669">
    <property type="entry name" value="PRK00432.1"/>
    <property type="match status" value="1"/>
</dbReference>
<dbReference type="Pfam" id="PF01599">
    <property type="entry name" value="Ribosomal_S27"/>
    <property type="match status" value="1"/>
</dbReference>
<dbReference type="SMART" id="SM01402">
    <property type="entry name" value="Ribosomal_S27"/>
    <property type="match status" value="1"/>
</dbReference>
<dbReference type="SUPFAM" id="SSF57829">
    <property type="entry name" value="Zn-binding ribosomal proteins"/>
    <property type="match status" value="1"/>
</dbReference>